<dbReference type="EC" id="2.1.3.3"/>
<dbReference type="EMBL" id="M29819">
    <property type="protein sequence ID" value="AAA50816.1"/>
    <property type="molecule type" value="mRNA"/>
</dbReference>
<dbReference type="EMBL" id="AACD01000076">
    <property type="protein sequence ID" value="EAA60326.1"/>
    <property type="molecule type" value="Genomic_DNA"/>
</dbReference>
<dbReference type="EMBL" id="BN001303">
    <property type="protein sequence ID" value="CBF77586.1"/>
    <property type="status" value="ALT_INIT"/>
    <property type="molecule type" value="Genomic_DNA"/>
</dbReference>
<dbReference type="PIR" id="S07317">
    <property type="entry name" value="OWASN"/>
</dbReference>
<dbReference type="RefSeq" id="XP_662013.1">
    <property type="nucleotide sequence ID" value="XM_656921.1"/>
</dbReference>
<dbReference type="SMR" id="P11803"/>
<dbReference type="FunCoup" id="P11803">
    <property type="interactions" value="640"/>
</dbReference>
<dbReference type="STRING" id="227321.P11803"/>
<dbReference type="GeneID" id="2872211"/>
<dbReference type="KEGG" id="ani:ANIA_04409"/>
<dbReference type="eggNOG" id="KOG1504">
    <property type="taxonomic scope" value="Eukaryota"/>
</dbReference>
<dbReference type="HOGENOM" id="CLU_043846_3_0_1"/>
<dbReference type="InParanoid" id="P11803"/>
<dbReference type="OrthoDB" id="10252326at2759"/>
<dbReference type="UniPathway" id="UPA00068">
    <property type="reaction ID" value="UER00112"/>
</dbReference>
<dbReference type="Proteomes" id="UP000000560">
    <property type="component" value="Chromosome III"/>
</dbReference>
<dbReference type="GO" id="GO:0005759">
    <property type="term" value="C:mitochondrial matrix"/>
    <property type="evidence" value="ECO:0007669"/>
    <property type="project" value="UniProtKB-SubCell"/>
</dbReference>
<dbReference type="GO" id="GO:0005739">
    <property type="term" value="C:mitochondrion"/>
    <property type="evidence" value="ECO:0000318"/>
    <property type="project" value="GO_Central"/>
</dbReference>
<dbReference type="GO" id="GO:0016597">
    <property type="term" value="F:amino acid binding"/>
    <property type="evidence" value="ECO:0007669"/>
    <property type="project" value="InterPro"/>
</dbReference>
<dbReference type="GO" id="GO:0004585">
    <property type="term" value="F:ornithine carbamoyltransferase activity"/>
    <property type="evidence" value="ECO:0000318"/>
    <property type="project" value="GO_Central"/>
</dbReference>
<dbReference type="GO" id="GO:0042450">
    <property type="term" value="P:arginine biosynthetic process via ornithine"/>
    <property type="evidence" value="ECO:0000318"/>
    <property type="project" value="GO_Central"/>
</dbReference>
<dbReference type="GO" id="GO:0019240">
    <property type="term" value="P:citrulline biosynthetic process"/>
    <property type="evidence" value="ECO:0000318"/>
    <property type="project" value="GO_Central"/>
</dbReference>
<dbReference type="GO" id="GO:0006526">
    <property type="term" value="P:L-arginine biosynthetic process"/>
    <property type="evidence" value="ECO:0007669"/>
    <property type="project" value="UniProtKB-UniPathway"/>
</dbReference>
<dbReference type="FunFam" id="3.40.50.1370:FF:000017">
    <property type="entry name" value="Ornithine carbamoyltransferase"/>
    <property type="match status" value="1"/>
</dbReference>
<dbReference type="FunFam" id="3.40.50.1370:FF:000009">
    <property type="entry name" value="Ornithine carbamoyltransferase, mitochondrial"/>
    <property type="match status" value="1"/>
</dbReference>
<dbReference type="Gene3D" id="3.40.50.1370">
    <property type="entry name" value="Aspartate/ornithine carbamoyltransferase"/>
    <property type="match status" value="2"/>
</dbReference>
<dbReference type="InterPro" id="IPR006132">
    <property type="entry name" value="Asp/Orn_carbamoyltranf_P-bd"/>
</dbReference>
<dbReference type="InterPro" id="IPR006130">
    <property type="entry name" value="Asp/Orn_carbamoylTrfase"/>
</dbReference>
<dbReference type="InterPro" id="IPR036901">
    <property type="entry name" value="Asp/Orn_carbamoylTrfase_sf"/>
</dbReference>
<dbReference type="InterPro" id="IPR006131">
    <property type="entry name" value="Asp_carbamoyltransf_Asp/Orn-bd"/>
</dbReference>
<dbReference type="InterPro" id="IPR002292">
    <property type="entry name" value="Orn/put_carbamltrans"/>
</dbReference>
<dbReference type="NCBIfam" id="TIGR00658">
    <property type="entry name" value="orni_carb_tr"/>
    <property type="match status" value="1"/>
</dbReference>
<dbReference type="NCBIfam" id="NF001986">
    <property type="entry name" value="PRK00779.1"/>
    <property type="match status" value="1"/>
</dbReference>
<dbReference type="PANTHER" id="PTHR45753">
    <property type="entry name" value="ORNITHINE CARBAMOYLTRANSFERASE, MITOCHONDRIAL"/>
    <property type="match status" value="1"/>
</dbReference>
<dbReference type="PANTHER" id="PTHR45753:SF3">
    <property type="entry name" value="ORNITHINE TRANSCARBAMYLASE, MITOCHONDRIAL"/>
    <property type="match status" value="1"/>
</dbReference>
<dbReference type="Pfam" id="PF00185">
    <property type="entry name" value="OTCace"/>
    <property type="match status" value="1"/>
</dbReference>
<dbReference type="Pfam" id="PF02729">
    <property type="entry name" value="OTCace_N"/>
    <property type="match status" value="1"/>
</dbReference>
<dbReference type="PRINTS" id="PR00100">
    <property type="entry name" value="AOTCASE"/>
</dbReference>
<dbReference type="PRINTS" id="PR00102">
    <property type="entry name" value="OTCASE"/>
</dbReference>
<dbReference type="SUPFAM" id="SSF53671">
    <property type="entry name" value="Aspartate/ornithine carbamoyltransferase"/>
    <property type="match status" value="1"/>
</dbReference>
<dbReference type="PROSITE" id="PS00097">
    <property type="entry name" value="CARBAMOYLTRANSFERASE"/>
    <property type="match status" value="1"/>
</dbReference>
<keyword id="KW-0028">Amino-acid biosynthesis</keyword>
<keyword id="KW-0055">Arginine biosynthesis</keyword>
<keyword id="KW-0496">Mitochondrion</keyword>
<keyword id="KW-1185">Reference proteome</keyword>
<keyword id="KW-0808">Transferase</keyword>
<keyword id="KW-0809">Transit peptide</keyword>
<name>OTC_EMENI</name>
<feature type="transit peptide" description="Mitochondrion" evidence="2">
    <location>
        <begin position="1"/>
        <end position="24"/>
    </location>
</feature>
<feature type="chain" id="PRO_0000042694" description="Ornithine carbamoyltransferase, mitochondrial">
    <location>
        <begin position="25"/>
        <end position="359"/>
    </location>
</feature>
<feature type="active site" description="Proton acceptor" evidence="1">
    <location>
        <position position="313"/>
    </location>
</feature>
<feature type="binding site" evidence="1">
    <location>
        <begin position="87"/>
        <end position="90"/>
    </location>
    <ligand>
        <name>carbamoyl phosphate</name>
        <dbReference type="ChEBI" id="CHEBI:58228"/>
    </ligand>
</feature>
<feature type="binding site" evidence="1">
    <location>
        <position position="138"/>
    </location>
    <ligand>
        <name>carbamoyl phosphate</name>
        <dbReference type="ChEBI" id="CHEBI:58228"/>
    </ligand>
</feature>
<feature type="binding site" evidence="1">
    <location>
        <position position="165"/>
    </location>
    <ligand>
        <name>carbamoyl phosphate</name>
        <dbReference type="ChEBI" id="CHEBI:58228"/>
    </ligand>
</feature>
<feature type="binding site" evidence="1">
    <location>
        <position position="168"/>
    </location>
    <ligand>
        <name>carbamoyl phosphate</name>
        <dbReference type="ChEBI" id="CHEBI:58228"/>
    </ligand>
</feature>
<feature type="binding site" evidence="1">
    <location>
        <position position="205"/>
    </location>
    <ligand>
        <name>L-ornithine</name>
        <dbReference type="ChEBI" id="CHEBI:46911"/>
    </ligand>
</feature>
<feature type="binding site" evidence="1">
    <location>
        <position position="271"/>
    </location>
    <ligand>
        <name>L-ornithine</name>
        <dbReference type="ChEBI" id="CHEBI:46911"/>
    </ligand>
</feature>
<feature type="binding site" evidence="1">
    <location>
        <position position="275"/>
    </location>
    <ligand>
        <name>L-ornithine</name>
        <dbReference type="ChEBI" id="CHEBI:46911"/>
    </ligand>
</feature>
<feature type="binding site" evidence="1">
    <location>
        <position position="276"/>
    </location>
    <ligand>
        <name>L-ornithine</name>
        <dbReference type="ChEBI" id="CHEBI:46911"/>
    </ligand>
</feature>
<feature type="binding site" evidence="1">
    <location>
        <begin position="313"/>
        <end position="314"/>
    </location>
    <ligand>
        <name>carbamoyl phosphate</name>
        <dbReference type="ChEBI" id="CHEBI:58228"/>
    </ligand>
</feature>
<feature type="binding site" evidence="1">
    <location>
        <position position="340"/>
    </location>
    <ligand>
        <name>carbamoyl phosphate</name>
        <dbReference type="ChEBI" id="CHEBI:58228"/>
    </ligand>
</feature>
<gene>
    <name type="primary">argB</name>
    <name type="ORF">AN4409</name>
</gene>
<reference key="1">
    <citation type="journal article" date="1986" name="Mol. Gen. Genet.">
        <title>Molecular analysis of the argB gene of Aspergillus nidulans.</title>
        <authorList>
            <person name="Upshall A."/>
            <person name="Gilbert T."/>
            <person name="Saari G."/>
            <person name="O'Hara P.J."/>
            <person name="Weglenski P."/>
            <person name="Berse B."/>
            <person name="Miller K."/>
            <person name="Timberlake W.E."/>
        </authorList>
    </citation>
    <scope>NUCLEOTIDE SEQUENCE [MRNA]</scope>
</reference>
<reference key="2">
    <citation type="journal article" date="2005" name="Nature">
        <title>Sequencing of Aspergillus nidulans and comparative analysis with A. fumigatus and A. oryzae.</title>
        <authorList>
            <person name="Galagan J.E."/>
            <person name="Calvo S.E."/>
            <person name="Cuomo C."/>
            <person name="Ma L.-J."/>
            <person name="Wortman J.R."/>
            <person name="Batzoglou S."/>
            <person name="Lee S.-I."/>
            <person name="Bastuerkmen M."/>
            <person name="Spevak C.C."/>
            <person name="Clutterbuck J."/>
            <person name="Kapitonov V."/>
            <person name="Jurka J."/>
            <person name="Scazzocchio C."/>
            <person name="Farman M.L."/>
            <person name="Butler J."/>
            <person name="Purcell S."/>
            <person name="Harris S."/>
            <person name="Braus G.H."/>
            <person name="Draht O."/>
            <person name="Busch S."/>
            <person name="D'Enfert C."/>
            <person name="Bouchier C."/>
            <person name="Goldman G.H."/>
            <person name="Bell-Pedersen D."/>
            <person name="Griffiths-Jones S."/>
            <person name="Doonan J.H."/>
            <person name="Yu J."/>
            <person name="Vienken K."/>
            <person name="Pain A."/>
            <person name="Freitag M."/>
            <person name="Selker E.U."/>
            <person name="Archer D.B."/>
            <person name="Penalva M.A."/>
            <person name="Oakley B.R."/>
            <person name="Momany M."/>
            <person name="Tanaka T."/>
            <person name="Kumagai T."/>
            <person name="Asai K."/>
            <person name="Machida M."/>
            <person name="Nierman W.C."/>
            <person name="Denning D.W."/>
            <person name="Caddick M.X."/>
            <person name="Hynes M."/>
            <person name="Paoletti M."/>
            <person name="Fischer R."/>
            <person name="Miller B.L."/>
            <person name="Dyer P.S."/>
            <person name="Sachs M.S."/>
            <person name="Osmani S.A."/>
            <person name="Birren B.W."/>
        </authorList>
    </citation>
    <scope>NUCLEOTIDE SEQUENCE [LARGE SCALE GENOMIC DNA]</scope>
    <source>
        <strain>FGSC A4 / ATCC 38163 / CBS 112.46 / NRRL 194 / M139</strain>
    </source>
</reference>
<reference key="3">
    <citation type="journal article" date="2009" name="Fungal Genet. Biol.">
        <title>The 2008 update of the Aspergillus nidulans genome annotation: a community effort.</title>
        <authorList>
            <person name="Wortman J.R."/>
            <person name="Gilsenan J.M."/>
            <person name="Joardar V."/>
            <person name="Deegan J."/>
            <person name="Clutterbuck J."/>
            <person name="Andersen M.R."/>
            <person name="Archer D."/>
            <person name="Bencina M."/>
            <person name="Braus G."/>
            <person name="Coutinho P."/>
            <person name="von Dohren H."/>
            <person name="Doonan J."/>
            <person name="Driessen A.J."/>
            <person name="Durek P."/>
            <person name="Espeso E."/>
            <person name="Fekete E."/>
            <person name="Flipphi M."/>
            <person name="Estrada C.G."/>
            <person name="Geysens S."/>
            <person name="Goldman G."/>
            <person name="de Groot P.W."/>
            <person name="Hansen K."/>
            <person name="Harris S.D."/>
            <person name="Heinekamp T."/>
            <person name="Helmstaedt K."/>
            <person name="Henrissat B."/>
            <person name="Hofmann G."/>
            <person name="Homan T."/>
            <person name="Horio T."/>
            <person name="Horiuchi H."/>
            <person name="James S."/>
            <person name="Jones M."/>
            <person name="Karaffa L."/>
            <person name="Karanyi Z."/>
            <person name="Kato M."/>
            <person name="Keller N."/>
            <person name="Kelly D.E."/>
            <person name="Kiel J.A."/>
            <person name="Kim J.M."/>
            <person name="van der Klei I.J."/>
            <person name="Klis F.M."/>
            <person name="Kovalchuk A."/>
            <person name="Krasevec N."/>
            <person name="Kubicek C.P."/>
            <person name="Liu B."/>
            <person name="Maccabe A."/>
            <person name="Meyer V."/>
            <person name="Mirabito P."/>
            <person name="Miskei M."/>
            <person name="Mos M."/>
            <person name="Mullins J."/>
            <person name="Nelson D.R."/>
            <person name="Nielsen J."/>
            <person name="Oakley B.R."/>
            <person name="Osmani S.A."/>
            <person name="Pakula T."/>
            <person name="Paszewski A."/>
            <person name="Paulsen I."/>
            <person name="Pilsyk S."/>
            <person name="Pocsi I."/>
            <person name="Punt P.J."/>
            <person name="Ram A.F."/>
            <person name="Ren Q."/>
            <person name="Robellet X."/>
            <person name="Robson G."/>
            <person name="Seiboth B."/>
            <person name="van Solingen P."/>
            <person name="Specht T."/>
            <person name="Sun J."/>
            <person name="Taheri-Talesh N."/>
            <person name="Takeshita N."/>
            <person name="Ussery D."/>
            <person name="vanKuyk P.A."/>
            <person name="Visser H."/>
            <person name="van de Vondervoort P.J."/>
            <person name="de Vries R.P."/>
            <person name="Walton J."/>
            <person name="Xiang X."/>
            <person name="Xiong Y."/>
            <person name="Zeng A.P."/>
            <person name="Brandt B.W."/>
            <person name="Cornell M.J."/>
            <person name="van den Hondel C.A."/>
            <person name="Visser J."/>
            <person name="Oliver S.G."/>
            <person name="Turner G."/>
        </authorList>
    </citation>
    <scope>GENOME REANNOTATION</scope>
    <source>
        <strain>FGSC A4 / ATCC 38163 / CBS 112.46 / NRRL 194 / M139</strain>
    </source>
</reference>
<organism>
    <name type="scientific">Emericella nidulans (strain FGSC A4 / ATCC 38163 / CBS 112.46 / NRRL 194 / M139)</name>
    <name type="common">Aspergillus nidulans</name>
    <dbReference type="NCBI Taxonomy" id="227321"/>
    <lineage>
        <taxon>Eukaryota</taxon>
        <taxon>Fungi</taxon>
        <taxon>Dikarya</taxon>
        <taxon>Ascomycota</taxon>
        <taxon>Pezizomycotina</taxon>
        <taxon>Eurotiomycetes</taxon>
        <taxon>Eurotiomycetidae</taxon>
        <taxon>Eurotiales</taxon>
        <taxon>Aspergillaceae</taxon>
        <taxon>Aspergillus</taxon>
        <taxon>Aspergillus subgen. Nidulantes</taxon>
    </lineage>
</organism>
<protein>
    <recommendedName>
        <fullName>Ornithine carbamoyltransferase, mitochondrial</fullName>
        <ecNumber>2.1.3.3</ecNumber>
    </recommendedName>
    <alternativeName>
        <fullName>Ornithine transcarbamylase</fullName>
        <shortName>OTCase</shortName>
    </alternativeName>
</protein>
<comment type="catalytic activity">
    <reaction>
        <text>carbamoyl phosphate + L-ornithine = L-citrulline + phosphate + H(+)</text>
        <dbReference type="Rhea" id="RHEA:19513"/>
        <dbReference type="ChEBI" id="CHEBI:15378"/>
        <dbReference type="ChEBI" id="CHEBI:43474"/>
        <dbReference type="ChEBI" id="CHEBI:46911"/>
        <dbReference type="ChEBI" id="CHEBI:57743"/>
        <dbReference type="ChEBI" id="CHEBI:58228"/>
        <dbReference type="EC" id="2.1.3.3"/>
    </reaction>
</comment>
<comment type="pathway">
    <text>Amino-acid biosynthesis; L-arginine biosynthesis; L-arginine from L-ornithine and carbamoyl phosphate: step 1/3.</text>
</comment>
<comment type="subunit">
    <text>Homotrimer.</text>
</comment>
<comment type="subcellular location">
    <subcellularLocation>
        <location>Mitochondrion matrix</location>
    </subcellularLocation>
</comment>
<comment type="similarity">
    <text evidence="3">Belongs to the aspartate/ornithine carbamoyltransferase superfamily. OTCase family.</text>
</comment>
<comment type="sequence caution" evidence="3">
    <conflict type="erroneous initiation">
        <sequence resource="EMBL-CDS" id="CBF77586"/>
    </conflict>
    <text>Extended N-terminus.</text>
</comment>
<proteinExistence type="evidence at transcript level"/>
<evidence type="ECO:0000250" key="1">
    <source>
        <dbReference type="UniProtKB" id="P00480"/>
    </source>
</evidence>
<evidence type="ECO:0000255" key="2"/>
<evidence type="ECO:0000305" key="3"/>
<sequence length="359" mass="39058">MASLRSVLKSQSLRHTVRSYSSQTMPPASPFAPRHFLSIADLSPSEFATLVRNASSHKRAIKSGSMPQNLQGSLLGKTVAMIFSKRSTRTRVSTEGAVVQMGGHPMFLGKDDIQLGVNESLYDTSVVISSMVSCIVARVGKHAEVADLAKHSSVPVINALCDSFHPLQAVADFQTIYEAFTPKAHHLSSLGLEGLKIAWVGDANNVLFDMAIAATKMGVDIAVATPKGYEIPPHMLELIKSAGEGVSKPGKLLQTNIPEEAVKDADILVTDTWVSMGQEEEKAQRLKEFDGFQITAELAKRGGAKEGWKFMHCLPRHPEEVSDEVFYSNRSLVFPEAENRLWAAISALEGFVVNKGKIE</sequence>
<accession>P11803</accession>
<accession>C8V8T3</accession>
<accession>Q5B4X1</accession>